<evidence type="ECO:0000255" key="1">
    <source>
        <dbReference type="HAMAP-Rule" id="MF_01382"/>
    </source>
</evidence>
<accession>Q92MI9</accession>
<protein>
    <recommendedName>
        <fullName evidence="1">Protein translocase subunit SecA</fullName>
        <ecNumber evidence="1">7.4.2.8</ecNumber>
    </recommendedName>
</protein>
<dbReference type="EC" id="7.4.2.8" evidence="1"/>
<dbReference type="EMBL" id="AL591688">
    <property type="protein sequence ID" value="CAC47206.1"/>
    <property type="molecule type" value="Genomic_DNA"/>
</dbReference>
<dbReference type="RefSeq" id="NP_386733.1">
    <property type="nucleotide sequence ID" value="NC_003047.1"/>
</dbReference>
<dbReference type="RefSeq" id="WP_003533499.1">
    <property type="nucleotide sequence ID" value="NC_003047.1"/>
</dbReference>
<dbReference type="SMR" id="Q92MI9"/>
<dbReference type="EnsemblBacteria" id="CAC47206">
    <property type="protein sequence ID" value="CAC47206"/>
    <property type="gene ID" value="SMc04458"/>
</dbReference>
<dbReference type="KEGG" id="sme:SMc04458"/>
<dbReference type="PATRIC" id="fig|266834.11.peg.4125"/>
<dbReference type="eggNOG" id="COG0653">
    <property type="taxonomic scope" value="Bacteria"/>
</dbReference>
<dbReference type="HOGENOM" id="CLU_005314_3_0_5"/>
<dbReference type="OrthoDB" id="9805579at2"/>
<dbReference type="Proteomes" id="UP000001976">
    <property type="component" value="Chromosome"/>
</dbReference>
<dbReference type="GO" id="GO:0031522">
    <property type="term" value="C:cell envelope Sec protein transport complex"/>
    <property type="evidence" value="ECO:0007669"/>
    <property type="project" value="TreeGrafter"/>
</dbReference>
<dbReference type="GO" id="GO:0005829">
    <property type="term" value="C:cytosol"/>
    <property type="evidence" value="ECO:0007669"/>
    <property type="project" value="TreeGrafter"/>
</dbReference>
<dbReference type="GO" id="GO:0005886">
    <property type="term" value="C:plasma membrane"/>
    <property type="evidence" value="ECO:0007669"/>
    <property type="project" value="UniProtKB-SubCell"/>
</dbReference>
<dbReference type="GO" id="GO:0005524">
    <property type="term" value="F:ATP binding"/>
    <property type="evidence" value="ECO:0007669"/>
    <property type="project" value="UniProtKB-UniRule"/>
</dbReference>
<dbReference type="GO" id="GO:0046872">
    <property type="term" value="F:metal ion binding"/>
    <property type="evidence" value="ECO:0007669"/>
    <property type="project" value="UniProtKB-KW"/>
</dbReference>
<dbReference type="GO" id="GO:0008564">
    <property type="term" value="F:protein-exporting ATPase activity"/>
    <property type="evidence" value="ECO:0007669"/>
    <property type="project" value="UniProtKB-EC"/>
</dbReference>
<dbReference type="GO" id="GO:0065002">
    <property type="term" value="P:intracellular protein transmembrane transport"/>
    <property type="evidence" value="ECO:0007669"/>
    <property type="project" value="UniProtKB-UniRule"/>
</dbReference>
<dbReference type="GO" id="GO:0017038">
    <property type="term" value="P:protein import"/>
    <property type="evidence" value="ECO:0007669"/>
    <property type="project" value="InterPro"/>
</dbReference>
<dbReference type="GO" id="GO:0006605">
    <property type="term" value="P:protein targeting"/>
    <property type="evidence" value="ECO:0007669"/>
    <property type="project" value="UniProtKB-UniRule"/>
</dbReference>
<dbReference type="GO" id="GO:0043952">
    <property type="term" value="P:protein transport by the Sec complex"/>
    <property type="evidence" value="ECO:0007669"/>
    <property type="project" value="TreeGrafter"/>
</dbReference>
<dbReference type="CDD" id="cd17928">
    <property type="entry name" value="DEXDc_SecA"/>
    <property type="match status" value="1"/>
</dbReference>
<dbReference type="CDD" id="cd18803">
    <property type="entry name" value="SF2_C_secA"/>
    <property type="match status" value="1"/>
</dbReference>
<dbReference type="FunFam" id="3.90.1440.10:FF:000001">
    <property type="entry name" value="Preprotein translocase subunit SecA"/>
    <property type="match status" value="1"/>
</dbReference>
<dbReference type="FunFam" id="1.10.3060.10:FF:000003">
    <property type="entry name" value="Protein translocase subunit SecA"/>
    <property type="match status" value="1"/>
</dbReference>
<dbReference type="FunFam" id="3.40.50.300:FF:001790">
    <property type="entry name" value="Protein translocase subunit SecA"/>
    <property type="match status" value="1"/>
</dbReference>
<dbReference type="Gene3D" id="3.10.450.50">
    <property type="match status" value="1"/>
</dbReference>
<dbReference type="Gene3D" id="1.10.3060.10">
    <property type="entry name" value="Helical scaffold and wing domains of SecA"/>
    <property type="match status" value="1"/>
</dbReference>
<dbReference type="Gene3D" id="3.40.50.300">
    <property type="entry name" value="P-loop containing nucleotide triphosphate hydrolases"/>
    <property type="match status" value="2"/>
</dbReference>
<dbReference type="Gene3D" id="3.90.1440.10">
    <property type="entry name" value="SecA, preprotein cross-linking domain"/>
    <property type="match status" value="1"/>
</dbReference>
<dbReference type="HAMAP" id="MF_01382">
    <property type="entry name" value="SecA"/>
    <property type="match status" value="1"/>
</dbReference>
<dbReference type="InterPro" id="IPR014001">
    <property type="entry name" value="Helicase_ATP-bd"/>
</dbReference>
<dbReference type="InterPro" id="IPR027417">
    <property type="entry name" value="P-loop_NTPase"/>
</dbReference>
<dbReference type="InterPro" id="IPR004027">
    <property type="entry name" value="SEC_C_motif"/>
</dbReference>
<dbReference type="InterPro" id="IPR000185">
    <property type="entry name" value="SecA"/>
</dbReference>
<dbReference type="InterPro" id="IPR020937">
    <property type="entry name" value="SecA_CS"/>
</dbReference>
<dbReference type="InterPro" id="IPR011115">
    <property type="entry name" value="SecA_DEAD"/>
</dbReference>
<dbReference type="InterPro" id="IPR014018">
    <property type="entry name" value="SecA_motor_DEAD"/>
</dbReference>
<dbReference type="InterPro" id="IPR011130">
    <property type="entry name" value="SecA_preprotein_X-link_dom"/>
</dbReference>
<dbReference type="InterPro" id="IPR044722">
    <property type="entry name" value="SecA_SF2_C"/>
</dbReference>
<dbReference type="InterPro" id="IPR011116">
    <property type="entry name" value="SecA_Wing/Scaffold"/>
</dbReference>
<dbReference type="InterPro" id="IPR036266">
    <property type="entry name" value="SecA_Wing/Scaffold_sf"/>
</dbReference>
<dbReference type="InterPro" id="IPR036670">
    <property type="entry name" value="SecA_X-link_sf"/>
</dbReference>
<dbReference type="NCBIfam" id="NF009538">
    <property type="entry name" value="PRK12904.1"/>
    <property type="match status" value="1"/>
</dbReference>
<dbReference type="NCBIfam" id="TIGR00963">
    <property type="entry name" value="secA"/>
    <property type="match status" value="1"/>
</dbReference>
<dbReference type="PANTHER" id="PTHR30612:SF0">
    <property type="entry name" value="CHLOROPLAST PROTEIN-TRANSPORTING ATPASE"/>
    <property type="match status" value="1"/>
</dbReference>
<dbReference type="PANTHER" id="PTHR30612">
    <property type="entry name" value="SECA INNER MEMBRANE COMPONENT OF SEC PROTEIN SECRETION SYSTEM"/>
    <property type="match status" value="1"/>
</dbReference>
<dbReference type="Pfam" id="PF21090">
    <property type="entry name" value="P-loop_SecA"/>
    <property type="match status" value="1"/>
</dbReference>
<dbReference type="Pfam" id="PF02810">
    <property type="entry name" value="SEC-C"/>
    <property type="match status" value="1"/>
</dbReference>
<dbReference type="Pfam" id="PF07517">
    <property type="entry name" value="SecA_DEAD"/>
    <property type="match status" value="1"/>
</dbReference>
<dbReference type="Pfam" id="PF01043">
    <property type="entry name" value="SecA_PP_bind"/>
    <property type="match status" value="1"/>
</dbReference>
<dbReference type="Pfam" id="PF07516">
    <property type="entry name" value="SecA_SW"/>
    <property type="match status" value="1"/>
</dbReference>
<dbReference type="PRINTS" id="PR00906">
    <property type="entry name" value="SECA"/>
</dbReference>
<dbReference type="SMART" id="SM00957">
    <property type="entry name" value="SecA_DEAD"/>
    <property type="match status" value="1"/>
</dbReference>
<dbReference type="SMART" id="SM00958">
    <property type="entry name" value="SecA_PP_bind"/>
    <property type="match status" value="1"/>
</dbReference>
<dbReference type="SUPFAM" id="SSF81886">
    <property type="entry name" value="Helical scaffold and wing domains of SecA"/>
    <property type="match status" value="1"/>
</dbReference>
<dbReference type="SUPFAM" id="SSF52540">
    <property type="entry name" value="P-loop containing nucleoside triphosphate hydrolases"/>
    <property type="match status" value="2"/>
</dbReference>
<dbReference type="SUPFAM" id="SSF81767">
    <property type="entry name" value="Pre-protein crosslinking domain of SecA"/>
    <property type="match status" value="1"/>
</dbReference>
<dbReference type="PROSITE" id="PS01312">
    <property type="entry name" value="SECA"/>
    <property type="match status" value="1"/>
</dbReference>
<dbReference type="PROSITE" id="PS51196">
    <property type="entry name" value="SECA_MOTOR_DEAD"/>
    <property type="match status" value="1"/>
</dbReference>
<gene>
    <name evidence="1" type="primary">secA</name>
    <name type="ordered locus">R02627</name>
    <name type="ORF">SMc04458</name>
</gene>
<feature type="chain" id="PRO_0000320917" description="Protein translocase subunit SecA">
    <location>
        <begin position="1"/>
        <end position="903"/>
    </location>
</feature>
<feature type="binding site" evidence="1">
    <location>
        <position position="89"/>
    </location>
    <ligand>
        <name>ATP</name>
        <dbReference type="ChEBI" id="CHEBI:30616"/>
    </ligand>
</feature>
<feature type="binding site" evidence="1">
    <location>
        <begin position="107"/>
        <end position="111"/>
    </location>
    <ligand>
        <name>ATP</name>
        <dbReference type="ChEBI" id="CHEBI:30616"/>
    </ligand>
</feature>
<feature type="binding site" evidence="1">
    <location>
        <position position="502"/>
    </location>
    <ligand>
        <name>ATP</name>
        <dbReference type="ChEBI" id="CHEBI:30616"/>
    </ligand>
</feature>
<feature type="binding site" evidence="1">
    <location>
        <position position="886"/>
    </location>
    <ligand>
        <name>Zn(2+)</name>
        <dbReference type="ChEBI" id="CHEBI:29105"/>
    </ligand>
</feature>
<feature type="binding site" evidence="1">
    <location>
        <position position="888"/>
    </location>
    <ligand>
        <name>Zn(2+)</name>
        <dbReference type="ChEBI" id="CHEBI:29105"/>
    </ligand>
</feature>
<feature type="binding site" evidence="1">
    <location>
        <position position="897"/>
    </location>
    <ligand>
        <name>Zn(2+)</name>
        <dbReference type="ChEBI" id="CHEBI:29105"/>
    </ligand>
</feature>
<feature type="binding site" evidence="1">
    <location>
        <position position="898"/>
    </location>
    <ligand>
        <name>Zn(2+)</name>
        <dbReference type="ChEBI" id="CHEBI:29105"/>
    </ligand>
</feature>
<organism>
    <name type="scientific">Rhizobium meliloti (strain 1021)</name>
    <name type="common">Ensifer meliloti</name>
    <name type="synonym">Sinorhizobium meliloti</name>
    <dbReference type="NCBI Taxonomy" id="266834"/>
    <lineage>
        <taxon>Bacteria</taxon>
        <taxon>Pseudomonadati</taxon>
        <taxon>Pseudomonadota</taxon>
        <taxon>Alphaproteobacteria</taxon>
        <taxon>Hyphomicrobiales</taxon>
        <taxon>Rhizobiaceae</taxon>
        <taxon>Sinorhizobium/Ensifer group</taxon>
        <taxon>Sinorhizobium</taxon>
    </lineage>
</organism>
<sequence>MVSLGGFARKLFGSANDRRVRGYKGRVDAINALEAEMKALSDEALAAKTAEFRRELADGKTLDDILVPAFAVVREAALRVLGLRPFDVQLIGGMILHERAIAEMKTGEGKTLVATLPVYLNALAGKGVHVVTVNDYLAQRDAGMMGRIYGFLGMTTGVIVHGLSDEQRRDAYACDVTYATNNELGFDYLRDNMKYERGQMVQRGHFFAIVDEVDSILVDEARTPLIISGPLDDRSDLYNTINEFIPLLSPEDYEIDEKQRSANFSEEGTEKLENMLREAGLLKGESLYDIENVAIVHHVNNALKAHKLFTRDKDYIVRNGEIVIIDEFTGRMMPGRRYSEGQHQALEAKEKVQIQPENQTLASITFQNYFRMYDKLAGMTGTAATEAEEFGNIYGLEVLEVPTNLPIKRIDEDDEVYRTVGEKFKAIIDEIKSAHERGQPMLVGTTSIEKSELLADMLKKSGFSKFQVLNARYHEQEAYIVAQAGVPGAVTIATNMAGRGTDIQLGGNPDMRIQQELADVEPGPEREAREKAIREEVQKLKEKALAAGGLYVLATERHESRRIDNQLRGRSGRQGDPGRSKFYLSLQDDLMRIFGSDRMDGMLQKLGLKEGEAIVHPWINKALERAQKKVEARNFDIRKNLLKYDDVLNDQRKVIFEQRIELMDAESVTDTVTDMRNEVIEEIVAKRIPERAYAEKWDAEGLKADVQQYFNLDLPIAEWVAEEGIAEDDIRERITAAVDKAAAERAERFGPEIMQYVERSVVLQTLDHLWREHIVNLDHLRSVIGFRGYAQRDPLQEYKSEAFELFQALLGNLRQAVTAQLMRVELVREAPEEPQPLPPMQAHHIDPLTGEDDFAQAGETLLAVAPANRDPADPSTWGKVARNEACPCGSGKKYKHCHGIYEA</sequence>
<proteinExistence type="inferred from homology"/>
<comment type="function">
    <text evidence="1">Part of the Sec protein translocase complex. Interacts with the SecYEG preprotein conducting channel. Has a central role in coupling the hydrolysis of ATP to the transfer of proteins into and across the cell membrane, serving both as a receptor for the preprotein-SecB complex and as an ATP-driven molecular motor driving the stepwise translocation of polypeptide chains across the membrane.</text>
</comment>
<comment type="catalytic activity">
    <reaction evidence="1">
        <text>ATP + H2O + cellular proteinSide 1 = ADP + phosphate + cellular proteinSide 2.</text>
        <dbReference type="EC" id="7.4.2.8"/>
    </reaction>
</comment>
<comment type="cofactor">
    <cofactor evidence="1">
        <name>Zn(2+)</name>
        <dbReference type="ChEBI" id="CHEBI:29105"/>
    </cofactor>
    <text evidence="1">May bind 1 zinc ion per subunit.</text>
</comment>
<comment type="subunit">
    <text evidence="1">Monomer and homodimer. Part of the essential Sec protein translocation apparatus which comprises SecA, SecYEG and auxiliary proteins SecDF-YajC and YidC.</text>
</comment>
<comment type="subcellular location">
    <subcellularLocation>
        <location evidence="1">Cell inner membrane</location>
        <topology evidence="1">Peripheral membrane protein</topology>
        <orientation evidence="1">Cytoplasmic side</orientation>
    </subcellularLocation>
    <subcellularLocation>
        <location evidence="1">Cytoplasm</location>
    </subcellularLocation>
    <text evidence="1">Distribution is 50-50.</text>
</comment>
<comment type="similarity">
    <text evidence="1">Belongs to the SecA family.</text>
</comment>
<reference key="1">
    <citation type="journal article" date="2001" name="Proc. Natl. Acad. Sci. U.S.A.">
        <title>Analysis of the chromosome sequence of the legume symbiont Sinorhizobium meliloti strain 1021.</title>
        <authorList>
            <person name="Capela D."/>
            <person name="Barloy-Hubler F."/>
            <person name="Gouzy J."/>
            <person name="Bothe G."/>
            <person name="Ampe F."/>
            <person name="Batut J."/>
            <person name="Boistard P."/>
            <person name="Becker A."/>
            <person name="Boutry M."/>
            <person name="Cadieu E."/>
            <person name="Dreano S."/>
            <person name="Gloux S."/>
            <person name="Godrie T."/>
            <person name="Goffeau A."/>
            <person name="Kahn D."/>
            <person name="Kiss E."/>
            <person name="Lelaure V."/>
            <person name="Masuy D."/>
            <person name="Pohl T."/>
            <person name="Portetelle D."/>
            <person name="Puehler A."/>
            <person name="Purnelle B."/>
            <person name="Ramsperger U."/>
            <person name="Renard C."/>
            <person name="Thebault P."/>
            <person name="Vandenbol M."/>
            <person name="Weidner S."/>
            <person name="Galibert F."/>
        </authorList>
    </citation>
    <scope>NUCLEOTIDE SEQUENCE [LARGE SCALE GENOMIC DNA]</scope>
    <source>
        <strain>1021</strain>
    </source>
</reference>
<reference key="2">
    <citation type="journal article" date="2001" name="Science">
        <title>The composite genome of the legume symbiont Sinorhizobium meliloti.</title>
        <authorList>
            <person name="Galibert F."/>
            <person name="Finan T.M."/>
            <person name="Long S.R."/>
            <person name="Puehler A."/>
            <person name="Abola P."/>
            <person name="Ampe F."/>
            <person name="Barloy-Hubler F."/>
            <person name="Barnett M.J."/>
            <person name="Becker A."/>
            <person name="Boistard P."/>
            <person name="Bothe G."/>
            <person name="Boutry M."/>
            <person name="Bowser L."/>
            <person name="Buhrmester J."/>
            <person name="Cadieu E."/>
            <person name="Capela D."/>
            <person name="Chain P."/>
            <person name="Cowie A."/>
            <person name="Davis R.W."/>
            <person name="Dreano S."/>
            <person name="Federspiel N.A."/>
            <person name="Fisher R.F."/>
            <person name="Gloux S."/>
            <person name="Godrie T."/>
            <person name="Goffeau A."/>
            <person name="Golding B."/>
            <person name="Gouzy J."/>
            <person name="Gurjal M."/>
            <person name="Hernandez-Lucas I."/>
            <person name="Hong A."/>
            <person name="Huizar L."/>
            <person name="Hyman R.W."/>
            <person name="Jones T."/>
            <person name="Kahn D."/>
            <person name="Kahn M.L."/>
            <person name="Kalman S."/>
            <person name="Keating D.H."/>
            <person name="Kiss E."/>
            <person name="Komp C."/>
            <person name="Lelaure V."/>
            <person name="Masuy D."/>
            <person name="Palm C."/>
            <person name="Peck M.C."/>
            <person name="Pohl T.M."/>
            <person name="Portetelle D."/>
            <person name="Purnelle B."/>
            <person name="Ramsperger U."/>
            <person name="Surzycki R."/>
            <person name="Thebault P."/>
            <person name="Vandenbol M."/>
            <person name="Vorhoelter F.J."/>
            <person name="Weidner S."/>
            <person name="Wells D.H."/>
            <person name="Wong K."/>
            <person name="Yeh K.-C."/>
            <person name="Batut J."/>
        </authorList>
    </citation>
    <scope>NUCLEOTIDE SEQUENCE [LARGE SCALE GENOMIC DNA]</scope>
    <source>
        <strain>1021</strain>
    </source>
</reference>
<keyword id="KW-0067">ATP-binding</keyword>
<keyword id="KW-0997">Cell inner membrane</keyword>
<keyword id="KW-1003">Cell membrane</keyword>
<keyword id="KW-0963">Cytoplasm</keyword>
<keyword id="KW-0472">Membrane</keyword>
<keyword id="KW-0479">Metal-binding</keyword>
<keyword id="KW-0547">Nucleotide-binding</keyword>
<keyword id="KW-0653">Protein transport</keyword>
<keyword id="KW-1185">Reference proteome</keyword>
<keyword id="KW-1278">Translocase</keyword>
<keyword id="KW-0811">Translocation</keyword>
<keyword id="KW-0813">Transport</keyword>
<keyword id="KW-0862">Zinc</keyword>
<name>SECA_RHIME</name>